<comment type="catalytic activity">
    <reaction evidence="1">
        <text>L-methionyl-[protein] + [thioredoxin]-disulfide + H2O = L-methionyl-(R)-S-oxide-[protein] + [thioredoxin]-dithiol</text>
        <dbReference type="Rhea" id="RHEA:24164"/>
        <dbReference type="Rhea" id="RHEA-COMP:10698"/>
        <dbReference type="Rhea" id="RHEA-COMP:10700"/>
        <dbReference type="Rhea" id="RHEA-COMP:12313"/>
        <dbReference type="Rhea" id="RHEA-COMP:12314"/>
        <dbReference type="ChEBI" id="CHEBI:15377"/>
        <dbReference type="ChEBI" id="CHEBI:16044"/>
        <dbReference type="ChEBI" id="CHEBI:29950"/>
        <dbReference type="ChEBI" id="CHEBI:45764"/>
        <dbReference type="ChEBI" id="CHEBI:50058"/>
        <dbReference type="EC" id="1.8.4.12"/>
    </reaction>
</comment>
<comment type="cofactor">
    <cofactor evidence="1">
        <name>Zn(2+)</name>
        <dbReference type="ChEBI" id="CHEBI:29105"/>
    </cofactor>
    <text evidence="1">Binds 1 zinc ion per subunit. The zinc ion is important for the structural integrity of the protein.</text>
</comment>
<comment type="similarity">
    <text evidence="1">Belongs to the MsrB Met sulfoxide reductase family.</text>
</comment>
<feature type="chain" id="PRO_1000068290" description="Peptide methionine sulfoxide reductase MsrB">
    <location>
        <begin position="1"/>
        <end position="137"/>
    </location>
</feature>
<feature type="domain" description="MsrB" evidence="2">
    <location>
        <begin position="7"/>
        <end position="129"/>
    </location>
</feature>
<feature type="active site" description="Nucleophile" evidence="2">
    <location>
        <position position="118"/>
    </location>
</feature>
<feature type="binding site" evidence="2">
    <location>
        <position position="46"/>
    </location>
    <ligand>
        <name>Zn(2+)</name>
        <dbReference type="ChEBI" id="CHEBI:29105"/>
    </ligand>
</feature>
<feature type="binding site" evidence="2">
    <location>
        <position position="49"/>
    </location>
    <ligand>
        <name>Zn(2+)</name>
        <dbReference type="ChEBI" id="CHEBI:29105"/>
    </ligand>
</feature>
<feature type="binding site" evidence="2">
    <location>
        <position position="95"/>
    </location>
    <ligand>
        <name>Zn(2+)</name>
        <dbReference type="ChEBI" id="CHEBI:29105"/>
    </ligand>
</feature>
<feature type="binding site" evidence="2">
    <location>
        <position position="98"/>
    </location>
    <ligand>
        <name>Zn(2+)</name>
        <dbReference type="ChEBI" id="CHEBI:29105"/>
    </ligand>
</feature>
<proteinExistence type="inferred from homology"/>
<name>MSRB_SERP5</name>
<sequence>MAKETTPDHPATELNEIQRYVTQERGTEAPYSGKLLHNKREGVYHCLCCNQPLFYSDSKYDSGCGWPSFYQPVSDDAIRYLDDNTHNMHRVEIRCGHCDAHLGHVFPDGPQPTGERFCVNSASLSFTDGENGDKTAG</sequence>
<accession>A8GFD8</accession>
<protein>
    <recommendedName>
        <fullName evidence="1">Peptide methionine sulfoxide reductase MsrB</fullName>
        <ecNumber evidence="1">1.8.4.12</ecNumber>
    </recommendedName>
    <alternativeName>
        <fullName evidence="1">Peptide-methionine (R)-S-oxide reductase</fullName>
    </alternativeName>
</protein>
<evidence type="ECO:0000255" key="1">
    <source>
        <dbReference type="HAMAP-Rule" id="MF_01400"/>
    </source>
</evidence>
<evidence type="ECO:0000255" key="2">
    <source>
        <dbReference type="PROSITE-ProRule" id="PRU01126"/>
    </source>
</evidence>
<dbReference type="EC" id="1.8.4.12" evidence="1"/>
<dbReference type="EMBL" id="CP000826">
    <property type="protein sequence ID" value="ABV41828.1"/>
    <property type="molecule type" value="Genomic_DNA"/>
</dbReference>
<dbReference type="SMR" id="A8GFD8"/>
<dbReference type="STRING" id="399741.Spro_2727"/>
<dbReference type="KEGG" id="spe:Spro_2727"/>
<dbReference type="eggNOG" id="COG0229">
    <property type="taxonomic scope" value="Bacteria"/>
</dbReference>
<dbReference type="HOGENOM" id="CLU_031040_8_5_6"/>
<dbReference type="OrthoDB" id="9785497at2"/>
<dbReference type="GO" id="GO:0005737">
    <property type="term" value="C:cytoplasm"/>
    <property type="evidence" value="ECO:0007669"/>
    <property type="project" value="TreeGrafter"/>
</dbReference>
<dbReference type="GO" id="GO:0033743">
    <property type="term" value="F:peptide-methionine (R)-S-oxide reductase activity"/>
    <property type="evidence" value="ECO:0007669"/>
    <property type="project" value="UniProtKB-UniRule"/>
</dbReference>
<dbReference type="GO" id="GO:0008270">
    <property type="term" value="F:zinc ion binding"/>
    <property type="evidence" value="ECO:0007669"/>
    <property type="project" value="UniProtKB-UniRule"/>
</dbReference>
<dbReference type="GO" id="GO:0030091">
    <property type="term" value="P:protein repair"/>
    <property type="evidence" value="ECO:0007669"/>
    <property type="project" value="InterPro"/>
</dbReference>
<dbReference type="GO" id="GO:0006979">
    <property type="term" value="P:response to oxidative stress"/>
    <property type="evidence" value="ECO:0007669"/>
    <property type="project" value="InterPro"/>
</dbReference>
<dbReference type="FunFam" id="2.170.150.20:FF:000001">
    <property type="entry name" value="Peptide methionine sulfoxide reductase MsrB"/>
    <property type="match status" value="1"/>
</dbReference>
<dbReference type="Gene3D" id="2.170.150.20">
    <property type="entry name" value="Peptide methionine sulfoxide reductase"/>
    <property type="match status" value="1"/>
</dbReference>
<dbReference type="HAMAP" id="MF_01400">
    <property type="entry name" value="MsrB"/>
    <property type="match status" value="1"/>
</dbReference>
<dbReference type="InterPro" id="IPR028427">
    <property type="entry name" value="Met_Sox_Rdtase_MsrB"/>
</dbReference>
<dbReference type="InterPro" id="IPR002579">
    <property type="entry name" value="Met_Sox_Rdtase_MsrB_dom"/>
</dbReference>
<dbReference type="InterPro" id="IPR011057">
    <property type="entry name" value="Mss4-like_sf"/>
</dbReference>
<dbReference type="NCBIfam" id="TIGR00357">
    <property type="entry name" value="peptide-methionine (R)-S-oxide reductase MsrB"/>
    <property type="match status" value="1"/>
</dbReference>
<dbReference type="PANTHER" id="PTHR10173">
    <property type="entry name" value="METHIONINE SULFOXIDE REDUCTASE"/>
    <property type="match status" value="1"/>
</dbReference>
<dbReference type="PANTHER" id="PTHR10173:SF52">
    <property type="entry name" value="METHIONINE-R-SULFOXIDE REDUCTASE B1"/>
    <property type="match status" value="1"/>
</dbReference>
<dbReference type="Pfam" id="PF01641">
    <property type="entry name" value="SelR"/>
    <property type="match status" value="1"/>
</dbReference>
<dbReference type="SUPFAM" id="SSF51316">
    <property type="entry name" value="Mss4-like"/>
    <property type="match status" value="1"/>
</dbReference>
<dbReference type="PROSITE" id="PS51790">
    <property type="entry name" value="MSRB"/>
    <property type="match status" value="1"/>
</dbReference>
<keyword id="KW-0479">Metal-binding</keyword>
<keyword id="KW-0560">Oxidoreductase</keyword>
<keyword id="KW-0862">Zinc</keyword>
<reference key="1">
    <citation type="submission" date="2007-09" db="EMBL/GenBank/DDBJ databases">
        <title>Complete sequence of chromosome of Serratia proteamaculans 568.</title>
        <authorList>
            <consortium name="US DOE Joint Genome Institute"/>
            <person name="Copeland A."/>
            <person name="Lucas S."/>
            <person name="Lapidus A."/>
            <person name="Barry K."/>
            <person name="Glavina del Rio T."/>
            <person name="Dalin E."/>
            <person name="Tice H."/>
            <person name="Pitluck S."/>
            <person name="Chain P."/>
            <person name="Malfatti S."/>
            <person name="Shin M."/>
            <person name="Vergez L."/>
            <person name="Schmutz J."/>
            <person name="Larimer F."/>
            <person name="Land M."/>
            <person name="Hauser L."/>
            <person name="Kyrpides N."/>
            <person name="Kim E."/>
            <person name="Taghavi S."/>
            <person name="Newman L."/>
            <person name="Vangronsveld J."/>
            <person name="van der Lelie D."/>
            <person name="Richardson P."/>
        </authorList>
    </citation>
    <scope>NUCLEOTIDE SEQUENCE [LARGE SCALE GENOMIC DNA]</scope>
    <source>
        <strain>568</strain>
    </source>
</reference>
<organism>
    <name type="scientific">Serratia proteamaculans (strain 568)</name>
    <dbReference type="NCBI Taxonomy" id="399741"/>
    <lineage>
        <taxon>Bacteria</taxon>
        <taxon>Pseudomonadati</taxon>
        <taxon>Pseudomonadota</taxon>
        <taxon>Gammaproteobacteria</taxon>
        <taxon>Enterobacterales</taxon>
        <taxon>Yersiniaceae</taxon>
        <taxon>Serratia</taxon>
    </lineage>
</organism>
<gene>
    <name evidence="1" type="primary">msrB</name>
    <name type="ordered locus">Spro_2727</name>
</gene>